<gene>
    <name evidence="1" type="primary">mtnA</name>
    <name type="ordered locus">TM_0911</name>
</gene>
<proteinExistence type="evidence at protein level"/>
<comment type="function">
    <text evidence="1">Catalyzes the interconversion of methylthioribose-1-phosphate (MTR-1-P) into methylthioribulose-1-phosphate (MTRu-1-P).</text>
</comment>
<comment type="catalytic activity">
    <reaction evidence="1">
        <text>5-(methylsulfanyl)-alpha-D-ribose 1-phosphate = 5-(methylsulfanyl)-D-ribulose 1-phosphate</text>
        <dbReference type="Rhea" id="RHEA:19989"/>
        <dbReference type="ChEBI" id="CHEBI:58533"/>
        <dbReference type="ChEBI" id="CHEBI:58548"/>
        <dbReference type="EC" id="5.3.1.23"/>
    </reaction>
</comment>
<comment type="pathway">
    <text evidence="1">Amino-acid biosynthesis; L-methionine biosynthesis via salvage pathway; L-methionine from S-methyl-5-thio-alpha-D-ribose 1-phosphate: step 1/6.</text>
</comment>
<comment type="similarity">
    <text evidence="2">Belongs to the eIF-2B alpha/beta/delta subunits family. MtnA subfamily.</text>
</comment>
<protein>
    <recommendedName>
        <fullName evidence="1">Methylthioribose-1-phosphate isomerase</fullName>
        <shortName evidence="1">M1Pi</shortName>
        <shortName evidence="1">MTR-1-P isomerase</shortName>
        <ecNumber evidence="1">5.3.1.23</ecNumber>
    </recommendedName>
    <alternativeName>
        <fullName evidence="1">S-methyl-5-thioribose-1-phosphate isomerase</fullName>
    </alternativeName>
</protein>
<organism>
    <name type="scientific">Thermotoga maritima (strain ATCC 43589 / DSM 3109 / JCM 10099 / NBRC 100826 / MSB8)</name>
    <dbReference type="NCBI Taxonomy" id="243274"/>
    <lineage>
        <taxon>Bacteria</taxon>
        <taxon>Thermotogati</taxon>
        <taxon>Thermotogota</taxon>
        <taxon>Thermotogae</taxon>
        <taxon>Thermotogales</taxon>
        <taxon>Thermotogaceae</taxon>
        <taxon>Thermotoga</taxon>
    </lineage>
</organism>
<evidence type="ECO:0000255" key="1">
    <source>
        <dbReference type="HAMAP-Rule" id="MF_01678"/>
    </source>
</evidence>
<evidence type="ECO:0000305" key="2"/>
<evidence type="ECO:0007829" key="3">
    <source>
        <dbReference type="PDB" id="1T9K"/>
    </source>
</evidence>
<accession>Q9X013</accession>
<dbReference type="EC" id="5.3.1.23" evidence="1"/>
<dbReference type="EMBL" id="AE000512">
    <property type="protein sequence ID" value="AAD35992.1"/>
    <property type="molecule type" value="Genomic_DNA"/>
</dbReference>
<dbReference type="PIR" id="F72319">
    <property type="entry name" value="F72319"/>
</dbReference>
<dbReference type="RefSeq" id="NP_228719.1">
    <property type="nucleotide sequence ID" value="NC_000853.1"/>
</dbReference>
<dbReference type="RefSeq" id="WP_004080652.1">
    <property type="nucleotide sequence ID" value="NZ_CP011107.1"/>
</dbReference>
<dbReference type="PDB" id="1T9K">
    <property type="method" value="X-ray"/>
    <property type="resolution" value="2.60 A"/>
    <property type="chains" value="A/B/C/D=1-343"/>
</dbReference>
<dbReference type="PDBsum" id="1T9K"/>
<dbReference type="SMR" id="Q9X013"/>
<dbReference type="FunCoup" id="Q9X013">
    <property type="interactions" value="312"/>
</dbReference>
<dbReference type="STRING" id="243274.TM_0911"/>
<dbReference type="PaxDb" id="243274-THEMA_00080"/>
<dbReference type="EnsemblBacteria" id="AAD35992">
    <property type="protein sequence ID" value="AAD35992"/>
    <property type="gene ID" value="TM_0911"/>
</dbReference>
<dbReference type="KEGG" id="tma:TM0911"/>
<dbReference type="KEGG" id="tmi:THEMA_00080"/>
<dbReference type="KEGG" id="tmm:Tmari_0913"/>
<dbReference type="KEGG" id="tmw:THMA_0933"/>
<dbReference type="eggNOG" id="COG0182">
    <property type="taxonomic scope" value="Bacteria"/>
</dbReference>
<dbReference type="InParanoid" id="Q9X013"/>
<dbReference type="OrthoDB" id="9803436at2"/>
<dbReference type="UniPathway" id="UPA00904">
    <property type="reaction ID" value="UER00874"/>
</dbReference>
<dbReference type="EvolutionaryTrace" id="Q9X013"/>
<dbReference type="Proteomes" id="UP000008183">
    <property type="component" value="Chromosome"/>
</dbReference>
<dbReference type="GO" id="GO:0046523">
    <property type="term" value="F:S-methyl-5-thioribose-1-phosphate isomerase activity"/>
    <property type="evidence" value="ECO:0000318"/>
    <property type="project" value="GO_Central"/>
</dbReference>
<dbReference type="GO" id="GO:0019509">
    <property type="term" value="P:L-methionine salvage from methylthioadenosine"/>
    <property type="evidence" value="ECO:0000318"/>
    <property type="project" value="GO_Central"/>
</dbReference>
<dbReference type="FunFam" id="1.20.120.420:FF:000003">
    <property type="entry name" value="Methylthioribose-1-phosphate isomerase"/>
    <property type="match status" value="1"/>
</dbReference>
<dbReference type="FunFam" id="3.40.50.10470:FF:000010">
    <property type="entry name" value="Methylthioribose-1-phosphate isomerase"/>
    <property type="match status" value="1"/>
</dbReference>
<dbReference type="Gene3D" id="1.20.120.420">
    <property type="entry name" value="translation initiation factor eif-2b, domain 1"/>
    <property type="match status" value="1"/>
</dbReference>
<dbReference type="Gene3D" id="3.40.50.10470">
    <property type="entry name" value="Translation initiation factor eif-2b, domain 2"/>
    <property type="match status" value="1"/>
</dbReference>
<dbReference type="HAMAP" id="MF_01678">
    <property type="entry name" value="Salvage_MtnA"/>
    <property type="match status" value="1"/>
</dbReference>
<dbReference type="InterPro" id="IPR000649">
    <property type="entry name" value="IF-2B-related"/>
</dbReference>
<dbReference type="InterPro" id="IPR005251">
    <property type="entry name" value="IF-M1Pi"/>
</dbReference>
<dbReference type="InterPro" id="IPR042529">
    <property type="entry name" value="IF_2B-like_C"/>
</dbReference>
<dbReference type="InterPro" id="IPR011559">
    <property type="entry name" value="Initiation_fac_2B_a/b/d"/>
</dbReference>
<dbReference type="InterPro" id="IPR027363">
    <property type="entry name" value="M1Pi_N"/>
</dbReference>
<dbReference type="InterPro" id="IPR037171">
    <property type="entry name" value="NagB/RpiA_transferase-like"/>
</dbReference>
<dbReference type="NCBIfam" id="TIGR00524">
    <property type="entry name" value="eIF-2B_rel"/>
    <property type="match status" value="1"/>
</dbReference>
<dbReference type="NCBIfam" id="NF004326">
    <property type="entry name" value="PRK05720.1"/>
    <property type="match status" value="1"/>
</dbReference>
<dbReference type="NCBIfam" id="TIGR00512">
    <property type="entry name" value="salvage_mtnA"/>
    <property type="match status" value="1"/>
</dbReference>
<dbReference type="PANTHER" id="PTHR43475">
    <property type="entry name" value="METHYLTHIORIBOSE-1-PHOSPHATE ISOMERASE"/>
    <property type="match status" value="1"/>
</dbReference>
<dbReference type="PANTHER" id="PTHR43475:SF1">
    <property type="entry name" value="METHYLTHIORIBOSE-1-PHOSPHATE ISOMERASE"/>
    <property type="match status" value="1"/>
</dbReference>
<dbReference type="Pfam" id="PF01008">
    <property type="entry name" value="IF-2B"/>
    <property type="match status" value="1"/>
</dbReference>
<dbReference type="SUPFAM" id="SSF100950">
    <property type="entry name" value="NagB/RpiA/CoA transferase-like"/>
    <property type="match status" value="1"/>
</dbReference>
<keyword id="KW-0002">3D-structure</keyword>
<keyword id="KW-0028">Amino-acid biosynthesis</keyword>
<keyword id="KW-0413">Isomerase</keyword>
<keyword id="KW-0486">Methionine biosynthesis</keyword>
<keyword id="KW-1185">Reference proteome</keyword>
<reference key="1">
    <citation type="journal article" date="1999" name="Nature">
        <title>Evidence for lateral gene transfer between Archaea and Bacteria from genome sequence of Thermotoga maritima.</title>
        <authorList>
            <person name="Nelson K.E."/>
            <person name="Clayton R.A."/>
            <person name="Gill S.R."/>
            <person name="Gwinn M.L."/>
            <person name="Dodson R.J."/>
            <person name="Haft D.H."/>
            <person name="Hickey E.K."/>
            <person name="Peterson J.D."/>
            <person name="Nelson W.C."/>
            <person name="Ketchum K.A."/>
            <person name="McDonald L.A."/>
            <person name="Utterback T.R."/>
            <person name="Malek J.A."/>
            <person name="Linher K.D."/>
            <person name="Garrett M.M."/>
            <person name="Stewart A.M."/>
            <person name="Cotton M.D."/>
            <person name="Pratt M.S."/>
            <person name="Phillips C.A."/>
            <person name="Richardson D.L."/>
            <person name="Heidelberg J.F."/>
            <person name="Sutton G.G."/>
            <person name="Fleischmann R.D."/>
            <person name="Eisen J.A."/>
            <person name="White O."/>
            <person name="Salzberg S.L."/>
            <person name="Smith H.O."/>
            <person name="Venter J.C."/>
            <person name="Fraser C.M."/>
        </authorList>
    </citation>
    <scope>NUCLEOTIDE SEQUENCE [LARGE SCALE GENOMIC DNA]</scope>
    <source>
        <strain>ATCC 43589 / DSM 3109 / JCM 10099 / NBRC 100826 / MSB8</strain>
    </source>
</reference>
<reference key="2">
    <citation type="submission" date="2005-01" db="PDB data bank">
        <title>X-ray crystal structure of aif-2b translation initiation factor from Thermotoga maritima.</title>
        <authorList>
            <consortium name="Midwest center for structural genomics (MCSG)"/>
        </authorList>
    </citation>
    <scope>X-RAY CRYSTALLOGRAPHY (2.6 ANGSTROMS) IN COMPLEX WITH SULFATE IONS</scope>
</reference>
<feature type="chain" id="PRO_0000156094" description="Methylthioribose-1-phosphate isomerase">
    <location>
        <begin position="1"/>
        <end position="343"/>
    </location>
</feature>
<feature type="active site" description="Proton donor" evidence="1">
    <location>
        <position position="234"/>
    </location>
</feature>
<feature type="binding site">
    <location>
        <begin position="48"/>
        <end position="50"/>
    </location>
    <ligand>
        <name>substrate</name>
    </ligand>
</feature>
<feature type="binding site">
    <location>
        <position position="88"/>
    </location>
    <ligand>
        <name>substrate</name>
    </ligand>
</feature>
<feature type="binding site" evidence="1">
    <location>
        <position position="193"/>
    </location>
    <ligand>
        <name>substrate</name>
    </ligand>
</feature>
<feature type="binding site">
    <location>
        <begin position="244"/>
        <end position="245"/>
    </location>
    <ligand>
        <name>substrate</name>
    </ligand>
</feature>
<feature type="site" description="Transition state stabilizer" evidence="1">
    <location>
        <position position="154"/>
    </location>
</feature>
<feature type="strand" evidence="3">
    <location>
        <begin position="6"/>
        <end position="10"/>
    </location>
</feature>
<feature type="strand" evidence="3">
    <location>
        <begin position="15"/>
        <end position="18"/>
    </location>
</feature>
<feature type="turn" evidence="3">
    <location>
        <begin position="20"/>
        <end position="25"/>
    </location>
</feature>
<feature type="strand" evidence="3">
    <location>
        <begin position="29"/>
        <end position="32"/>
    </location>
</feature>
<feature type="helix" evidence="3">
    <location>
        <begin position="35"/>
        <end position="43"/>
    </location>
</feature>
<feature type="helix" evidence="3">
    <location>
        <begin position="50"/>
        <end position="66"/>
    </location>
</feature>
<feature type="helix" evidence="3">
    <location>
        <begin position="73"/>
        <end position="85"/>
    </location>
</feature>
<feature type="helix" evidence="3">
    <location>
        <begin position="93"/>
        <end position="106"/>
    </location>
</feature>
<feature type="turn" evidence="3">
    <location>
        <begin position="107"/>
        <end position="110"/>
    </location>
</feature>
<feature type="helix" evidence="3">
    <location>
        <begin position="114"/>
        <end position="141"/>
    </location>
</feature>
<feature type="strand" evidence="3">
    <location>
        <begin position="148"/>
        <end position="152"/>
    </location>
</feature>
<feature type="helix" evidence="3">
    <location>
        <begin position="158"/>
        <end position="160"/>
    </location>
</feature>
<feature type="strand" evidence="3">
    <location>
        <begin position="161"/>
        <end position="164"/>
    </location>
</feature>
<feature type="helix" evidence="3">
    <location>
        <begin position="167"/>
        <end position="176"/>
    </location>
</feature>
<feature type="strand" evidence="3">
    <location>
        <begin position="181"/>
        <end position="186"/>
    </location>
</feature>
<feature type="turn" evidence="3">
    <location>
        <begin position="189"/>
        <end position="192"/>
    </location>
</feature>
<feature type="helix" evidence="3">
    <location>
        <begin position="193"/>
        <end position="196"/>
    </location>
</feature>
<feature type="helix" evidence="3">
    <location>
        <begin position="198"/>
        <end position="203"/>
    </location>
</feature>
<feature type="turn" evidence="3">
    <location>
        <begin position="204"/>
        <end position="206"/>
    </location>
</feature>
<feature type="strand" evidence="3">
    <location>
        <begin position="208"/>
        <end position="212"/>
    </location>
</feature>
<feature type="helix" evidence="3">
    <location>
        <begin position="214"/>
        <end position="216"/>
    </location>
</feature>
<feature type="helix" evidence="3">
    <location>
        <begin position="217"/>
        <end position="222"/>
    </location>
</feature>
<feature type="strand" evidence="3">
    <location>
        <begin position="227"/>
        <end position="231"/>
    </location>
</feature>
<feature type="strand" evidence="3">
    <location>
        <begin position="234"/>
        <end position="237"/>
    </location>
</feature>
<feature type="strand" evidence="3">
    <location>
        <begin position="242"/>
        <end position="245"/>
    </location>
</feature>
<feature type="helix" evidence="3">
    <location>
        <begin position="248"/>
        <end position="257"/>
    </location>
</feature>
<feature type="strand" evidence="3">
    <location>
        <begin position="262"/>
        <end position="265"/>
    </location>
</feature>
<feature type="helix" evidence="3">
    <location>
        <begin position="268"/>
        <end position="270"/>
    </location>
</feature>
<feature type="helix" evidence="3">
    <location>
        <begin position="278"/>
        <end position="280"/>
    </location>
</feature>
<feature type="helix" evidence="3">
    <location>
        <begin position="289"/>
        <end position="292"/>
    </location>
</feature>
<feature type="strand" evidence="3">
    <location>
        <begin position="309"/>
        <end position="314"/>
    </location>
</feature>
<feature type="helix" evidence="3">
    <location>
        <begin position="316"/>
        <end position="318"/>
    </location>
</feature>
<feature type="strand" evidence="3">
    <location>
        <begin position="320"/>
        <end position="324"/>
    </location>
</feature>
<feature type="strand" evidence="3">
    <location>
        <begin position="327"/>
        <end position="329"/>
    </location>
</feature>
<feature type="helix" evidence="3">
    <location>
        <begin position="333"/>
        <end position="341"/>
    </location>
</feature>
<name>MTNA_THEMA</name>
<sequence>MKLKTKTMEWSGNSLKLLDQRKLPFIEEYVECKTHEEVAHAIKEMIVRGAPAIGVAAAFGYVLGLRDYKTGSLTDWMKQVKETLARTRPTAVNLFWALNRMEKVFFENADRENLFEILENEALKMAYEDIEVNKAIGKNGAQLIKDGSTILTHCNAGALATVDYGTALGVIRAAVESGKRIRVFADETRPYLQGARLTAWELMKDGIEVYVITDNMAGWLMKRGLIDAVVVGADRIALNGDTANKIGTYSLAVLAKRNNIPFYVAAPVSTIDPTIRSGEEIPIEERRPEEVTHCGGNRIAPEGVKVLNPAFDVTENTLITAIITEKGVIRPPFEENIKKILEV</sequence>